<protein>
    <recommendedName>
        <fullName>Nitrogen fixation nifHD region GlnB-like protein 1</fullName>
    </recommendedName>
    <alternativeName>
        <fullName>ORF-105</fullName>
    </alternativeName>
</protein>
<keyword id="KW-0535">Nitrogen fixation</keyword>
<keyword id="KW-0804">Transcription</keyword>
<keyword id="KW-0805">Transcription regulation</keyword>
<reference key="1">
    <citation type="journal article" date="1991" name="Res. Microbiol.">
        <title>Nucleotide sequence of nifH regions from Methanobacterium ivanovii and Methanosarcina barkeri 227 and characterization of glnB-like genes.</title>
        <authorList>
            <person name="Sibold L."/>
            <person name="Henriquet M."/>
            <person name="Possot O."/>
            <person name="Aubert J.-P."/>
        </authorList>
    </citation>
    <scope>NUCLEOTIDE SEQUENCE [GENOMIC DNA]</scope>
</reference>
<dbReference type="EMBL" id="X56071">
    <property type="protein sequence ID" value="CAA39549.1"/>
    <property type="molecule type" value="Genomic_DNA"/>
</dbReference>
<dbReference type="SMR" id="P51603"/>
<dbReference type="GO" id="GO:0005829">
    <property type="term" value="C:cytosol"/>
    <property type="evidence" value="ECO:0007669"/>
    <property type="project" value="TreeGrafter"/>
</dbReference>
<dbReference type="GO" id="GO:0005524">
    <property type="term" value="F:ATP binding"/>
    <property type="evidence" value="ECO:0007669"/>
    <property type="project" value="TreeGrafter"/>
</dbReference>
<dbReference type="GO" id="GO:0030234">
    <property type="term" value="F:enzyme regulator activity"/>
    <property type="evidence" value="ECO:0007669"/>
    <property type="project" value="InterPro"/>
</dbReference>
<dbReference type="GO" id="GO:0009399">
    <property type="term" value="P:nitrogen fixation"/>
    <property type="evidence" value="ECO:0007669"/>
    <property type="project" value="UniProtKB-KW"/>
</dbReference>
<dbReference type="GO" id="GO:0006808">
    <property type="term" value="P:regulation of nitrogen utilization"/>
    <property type="evidence" value="ECO:0007669"/>
    <property type="project" value="InterPro"/>
</dbReference>
<dbReference type="Gene3D" id="3.30.70.120">
    <property type="match status" value="1"/>
</dbReference>
<dbReference type="InterPro" id="IPR002187">
    <property type="entry name" value="N-reg_PII"/>
</dbReference>
<dbReference type="InterPro" id="IPR011322">
    <property type="entry name" value="N-reg_PII-like_a/b"/>
</dbReference>
<dbReference type="InterPro" id="IPR015867">
    <property type="entry name" value="N-reg_PII/ATP_PRibTrfase_C"/>
</dbReference>
<dbReference type="InterPro" id="IPR017918">
    <property type="entry name" value="N-reg_PII_CS"/>
</dbReference>
<dbReference type="PANTHER" id="PTHR30115">
    <property type="entry name" value="NITROGEN REGULATORY PROTEIN P-II"/>
    <property type="match status" value="1"/>
</dbReference>
<dbReference type="PANTHER" id="PTHR30115:SF13">
    <property type="entry name" value="PII-LIKE PROTEIN GLNBI"/>
    <property type="match status" value="1"/>
</dbReference>
<dbReference type="Pfam" id="PF00543">
    <property type="entry name" value="P-II"/>
    <property type="match status" value="1"/>
</dbReference>
<dbReference type="PRINTS" id="PR00340">
    <property type="entry name" value="PIIGLNB"/>
</dbReference>
<dbReference type="SMART" id="SM00938">
    <property type="entry name" value="P-II"/>
    <property type="match status" value="1"/>
</dbReference>
<dbReference type="SUPFAM" id="SSF54913">
    <property type="entry name" value="GlnB-like"/>
    <property type="match status" value="1"/>
</dbReference>
<dbReference type="PROSITE" id="PS00638">
    <property type="entry name" value="PII_GLNB_CTER"/>
    <property type="match status" value="1"/>
</dbReference>
<dbReference type="PROSITE" id="PS51343">
    <property type="entry name" value="PII_GLNB_DOM"/>
    <property type="match status" value="1"/>
</dbReference>
<sequence>MKMIRAILRPDKVEEVVDALSNAGHVALTKMDVIGRGKQKGIRLDNIYYDELPKVMLLLVTPSEEIDDIIEIINETAFTGNFGDGKIFISPVEEAYTVRTRSKGL</sequence>
<organism>
    <name type="scientific">Methanobacterium ivanovii</name>
    <dbReference type="NCBI Taxonomy" id="2163"/>
    <lineage>
        <taxon>Archaea</taxon>
        <taxon>Methanobacteriati</taxon>
        <taxon>Methanobacteriota</taxon>
        <taxon>Methanomada group</taxon>
        <taxon>Methanobacteria</taxon>
        <taxon>Methanobacteriales</taxon>
        <taxon>Methanobacteriaceae</taxon>
        <taxon>Methanobacterium</taxon>
    </lineage>
</organism>
<evidence type="ECO:0000255" key="1">
    <source>
        <dbReference type="PROSITE-ProRule" id="PRU00675"/>
    </source>
</evidence>
<accession>P51603</accession>
<name>GLNB1_METIV</name>
<gene>
    <name type="primary">glnBA</name>
</gene>
<feature type="chain" id="PRO_0000139804" description="Nitrogen fixation nifHD region GlnB-like protein 1">
    <location>
        <begin position="1"/>
        <end position="105"/>
    </location>
</feature>
<proteinExistence type="inferred from homology"/>
<comment type="function">
    <text>Could be involved in the regulation of nitrogen fixation.</text>
</comment>
<comment type="similarity">
    <text evidence="1">Belongs to the P(II) protein family.</text>
</comment>